<sequence>MTIIVTGAAGFIGSNLVKGLNARGENHIVAVDNLHRADKFHNLVDCEIRDYLDKDDFLSRFERGEFGRVRAVFHLGACTDTMEQDGRYLMENNYRYSKTLMELCLAQDTQFIYASSAAVYGESHSFREAREYERPLSVYGYSKFLFDQAVRNRLDGALSQVVGLRYFNVYGPGEAHKARMASIVCQQFEQFRAEGTVKLFGEHGGHGPGCQSHDFVSIDDVVKVNLFFLDHPRRSGIFNVGSGHARSFNDVACVVVNTLRAAEDKPPLALEELVQEGLLEYLRFPDALRGRYQSFTQSDSSRLREAGYTAPFVAMEEGVARYCQWLLERGQ</sequence>
<comment type="function">
    <text evidence="1">Catalyzes the interconversion between ADP-D-glycero-beta-D-manno-heptose and ADP-L-glycero-beta-D-manno-heptose via an epimerization at carbon 6 of the heptose.</text>
</comment>
<comment type="catalytic activity">
    <reaction evidence="1">
        <text>ADP-D-glycero-beta-D-manno-heptose = ADP-L-glycero-beta-D-manno-heptose</text>
        <dbReference type="Rhea" id="RHEA:17577"/>
        <dbReference type="ChEBI" id="CHEBI:59967"/>
        <dbReference type="ChEBI" id="CHEBI:61506"/>
        <dbReference type="EC" id="5.1.3.20"/>
    </reaction>
</comment>
<comment type="cofactor">
    <cofactor evidence="1">
        <name>NADP(+)</name>
        <dbReference type="ChEBI" id="CHEBI:58349"/>
    </cofactor>
    <text evidence="1">Binds 1 NADP(+) per subunit.</text>
</comment>
<comment type="pathway">
    <text evidence="1">Nucleotide-sugar biosynthesis; ADP-L-glycero-beta-D-manno-heptose biosynthesis; ADP-L-glycero-beta-D-manno-heptose from D-glycero-beta-D-manno-heptose 7-phosphate: step 4/4.</text>
</comment>
<comment type="subunit">
    <text evidence="1">Homopentamer.</text>
</comment>
<comment type="domain">
    <text evidence="1">Contains a large N-terminal NADP-binding domain, and a smaller C-terminal substrate-binding domain.</text>
</comment>
<comment type="similarity">
    <text evidence="1">Belongs to the NAD(P)-dependent epimerase/dehydratase family. HldD subfamily.</text>
</comment>
<proteinExistence type="inferred from homology"/>
<organism>
    <name type="scientific">Cupriavidus pinatubonensis (strain JMP 134 / LMG 1197)</name>
    <name type="common">Cupriavidus necator (strain JMP 134)</name>
    <dbReference type="NCBI Taxonomy" id="264198"/>
    <lineage>
        <taxon>Bacteria</taxon>
        <taxon>Pseudomonadati</taxon>
        <taxon>Pseudomonadota</taxon>
        <taxon>Betaproteobacteria</taxon>
        <taxon>Burkholderiales</taxon>
        <taxon>Burkholderiaceae</taxon>
        <taxon>Cupriavidus</taxon>
    </lineage>
</organism>
<dbReference type="EC" id="5.1.3.20" evidence="1"/>
<dbReference type="EMBL" id="CP000090">
    <property type="protein sequence ID" value="AAZ61924.1"/>
    <property type="molecule type" value="Genomic_DNA"/>
</dbReference>
<dbReference type="SMR" id="Q46Y59"/>
<dbReference type="STRING" id="264198.Reut_A2563"/>
<dbReference type="KEGG" id="reu:Reut_A2563"/>
<dbReference type="eggNOG" id="COG0451">
    <property type="taxonomic scope" value="Bacteria"/>
</dbReference>
<dbReference type="HOGENOM" id="CLU_007383_1_3_4"/>
<dbReference type="OrthoDB" id="9803010at2"/>
<dbReference type="UniPathway" id="UPA00356">
    <property type="reaction ID" value="UER00440"/>
</dbReference>
<dbReference type="GO" id="GO:0008712">
    <property type="term" value="F:ADP-glyceromanno-heptose 6-epimerase activity"/>
    <property type="evidence" value="ECO:0007669"/>
    <property type="project" value="UniProtKB-UniRule"/>
</dbReference>
<dbReference type="GO" id="GO:0050661">
    <property type="term" value="F:NADP binding"/>
    <property type="evidence" value="ECO:0007669"/>
    <property type="project" value="InterPro"/>
</dbReference>
<dbReference type="GO" id="GO:0097171">
    <property type="term" value="P:ADP-L-glycero-beta-D-manno-heptose biosynthetic process"/>
    <property type="evidence" value="ECO:0007669"/>
    <property type="project" value="UniProtKB-UniPathway"/>
</dbReference>
<dbReference type="GO" id="GO:0005975">
    <property type="term" value="P:carbohydrate metabolic process"/>
    <property type="evidence" value="ECO:0007669"/>
    <property type="project" value="UniProtKB-UniRule"/>
</dbReference>
<dbReference type="CDD" id="cd05248">
    <property type="entry name" value="ADP_GME_SDR_e"/>
    <property type="match status" value="1"/>
</dbReference>
<dbReference type="Gene3D" id="3.40.50.720">
    <property type="entry name" value="NAD(P)-binding Rossmann-like Domain"/>
    <property type="match status" value="1"/>
</dbReference>
<dbReference type="Gene3D" id="3.90.25.10">
    <property type="entry name" value="UDP-galactose 4-epimerase, domain 1"/>
    <property type="match status" value="1"/>
</dbReference>
<dbReference type="HAMAP" id="MF_01601">
    <property type="entry name" value="Heptose_epimerase"/>
    <property type="match status" value="1"/>
</dbReference>
<dbReference type="InterPro" id="IPR001509">
    <property type="entry name" value="Epimerase_deHydtase"/>
</dbReference>
<dbReference type="InterPro" id="IPR011912">
    <property type="entry name" value="Heptose_epim"/>
</dbReference>
<dbReference type="InterPro" id="IPR036291">
    <property type="entry name" value="NAD(P)-bd_dom_sf"/>
</dbReference>
<dbReference type="NCBIfam" id="TIGR02197">
    <property type="entry name" value="heptose_epim"/>
    <property type="match status" value="1"/>
</dbReference>
<dbReference type="PANTHER" id="PTHR43103:SF3">
    <property type="entry name" value="ADP-L-GLYCERO-D-MANNO-HEPTOSE-6-EPIMERASE"/>
    <property type="match status" value="1"/>
</dbReference>
<dbReference type="PANTHER" id="PTHR43103">
    <property type="entry name" value="NUCLEOSIDE-DIPHOSPHATE-SUGAR EPIMERASE"/>
    <property type="match status" value="1"/>
</dbReference>
<dbReference type="Pfam" id="PF01370">
    <property type="entry name" value="Epimerase"/>
    <property type="match status" value="1"/>
</dbReference>
<dbReference type="SUPFAM" id="SSF51735">
    <property type="entry name" value="NAD(P)-binding Rossmann-fold domains"/>
    <property type="match status" value="1"/>
</dbReference>
<protein>
    <recommendedName>
        <fullName evidence="1">ADP-L-glycero-D-manno-heptose-6-epimerase</fullName>
        <ecNumber evidence="1">5.1.3.20</ecNumber>
    </recommendedName>
    <alternativeName>
        <fullName evidence="1">ADP-L-glycero-beta-D-manno-heptose-6-epimerase</fullName>
        <shortName evidence="1">ADP-glyceromanno-heptose 6-epimerase</shortName>
        <shortName evidence="1">ADP-hep 6-epimerase</shortName>
        <shortName evidence="1">AGME</shortName>
    </alternativeName>
</protein>
<feature type="chain" id="PRO_0000255737" description="ADP-L-glycero-D-manno-heptose-6-epimerase">
    <location>
        <begin position="1"/>
        <end position="331"/>
    </location>
</feature>
<feature type="active site" description="Proton acceptor" evidence="1">
    <location>
        <position position="139"/>
    </location>
</feature>
<feature type="active site" description="Proton acceptor" evidence="1">
    <location>
        <position position="177"/>
    </location>
</feature>
<feature type="binding site" evidence="1">
    <location>
        <begin position="11"/>
        <end position="12"/>
    </location>
    <ligand>
        <name>NADP(+)</name>
        <dbReference type="ChEBI" id="CHEBI:58349"/>
    </ligand>
</feature>
<feature type="binding site" evidence="1">
    <location>
        <begin position="32"/>
        <end position="33"/>
    </location>
    <ligand>
        <name>NADP(+)</name>
        <dbReference type="ChEBI" id="CHEBI:58349"/>
    </ligand>
</feature>
<feature type="binding site" evidence="1">
    <location>
        <position position="39"/>
    </location>
    <ligand>
        <name>NADP(+)</name>
        <dbReference type="ChEBI" id="CHEBI:58349"/>
    </ligand>
</feature>
<feature type="binding site" evidence="1">
    <location>
        <position position="54"/>
    </location>
    <ligand>
        <name>NADP(+)</name>
        <dbReference type="ChEBI" id="CHEBI:58349"/>
    </ligand>
</feature>
<feature type="binding site" evidence="1">
    <location>
        <begin position="75"/>
        <end position="79"/>
    </location>
    <ligand>
        <name>NADP(+)</name>
        <dbReference type="ChEBI" id="CHEBI:58349"/>
    </ligand>
</feature>
<feature type="binding site" evidence="1">
    <location>
        <position position="92"/>
    </location>
    <ligand>
        <name>NADP(+)</name>
        <dbReference type="ChEBI" id="CHEBI:58349"/>
    </ligand>
</feature>
<feature type="binding site" evidence="1">
    <location>
        <position position="143"/>
    </location>
    <ligand>
        <name>NADP(+)</name>
        <dbReference type="ChEBI" id="CHEBI:58349"/>
    </ligand>
</feature>
<feature type="binding site" evidence="1">
    <location>
        <position position="168"/>
    </location>
    <ligand>
        <name>substrate</name>
    </ligand>
</feature>
<feature type="binding site" evidence="1">
    <location>
        <position position="169"/>
    </location>
    <ligand>
        <name>NADP(+)</name>
        <dbReference type="ChEBI" id="CHEBI:58349"/>
    </ligand>
</feature>
<feature type="binding site" evidence="1">
    <location>
        <position position="177"/>
    </location>
    <ligand>
        <name>NADP(+)</name>
        <dbReference type="ChEBI" id="CHEBI:58349"/>
    </ligand>
</feature>
<feature type="binding site" evidence="1">
    <location>
        <position position="179"/>
    </location>
    <ligand>
        <name>substrate</name>
    </ligand>
</feature>
<feature type="binding site" evidence="1">
    <location>
        <position position="186"/>
    </location>
    <ligand>
        <name>substrate</name>
    </ligand>
</feature>
<feature type="binding site" evidence="1">
    <location>
        <begin position="200"/>
        <end position="203"/>
    </location>
    <ligand>
        <name>substrate</name>
    </ligand>
</feature>
<feature type="binding site" evidence="1">
    <location>
        <position position="213"/>
    </location>
    <ligand>
        <name>substrate</name>
    </ligand>
</feature>
<feature type="binding site" evidence="1">
    <location>
        <position position="292"/>
    </location>
    <ligand>
        <name>substrate</name>
    </ligand>
</feature>
<name>HLDD_CUPPJ</name>
<reference key="1">
    <citation type="journal article" date="2010" name="PLoS ONE">
        <title>The complete multipartite genome sequence of Cupriavidus necator JMP134, a versatile pollutant degrader.</title>
        <authorList>
            <person name="Lykidis A."/>
            <person name="Perez-Pantoja D."/>
            <person name="Ledger T."/>
            <person name="Mavromatis K."/>
            <person name="Anderson I.J."/>
            <person name="Ivanova N.N."/>
            <person name="Hooper S.D."/>
            <person name="Lapidus A."/>
            <person name="Lucas S."/>
            <person name="Gonzalez B."/>
            <person name="Kyrpides N.C."/>
        </authorList>
    </citation>
    <scope>NUCLEOTIDE SEQUENCE [LARGE SCALE GENOMIC DNA]</scope>
    <source>
        <strain>JMP134 / LMG 1197</strain>
    </source>
</reference>
<gene>
    <name evidence="1" type="primary">hldD</name>
    <name type="ordered locus">Reut_A2563</name>
</gene>
<evidence type="ECO:0000255" key="1">
    <source>
        <dbReference type="HAMAP-Rule" id="MF_01601"/>
    </source>
</evidence>
<accession>Q46Y59</accession>
<keyword id="KW-0119">Carbohydrate metabolism</keyword>
<keyword id="KW-0413">Isomerase</keyword>
<keyword id="KW-0521">NADP</keyword>